<feature type="chain" id="PRO_0000288017" description="Energy-coupling factor transporter ATP-binding protein EcfA">
    <location>
        <begin position="1"/>
        <end position="273"/>
    </location>
</feature>
<feature type="domain" description="ABC transporter" evidence="1">
    <location>
        <begin position="2"/>
        <end position="237"/>
    </location>
</feature>
<feature type="binding site" evidence="1">
    <location>
        <begin position="36"/>
        <end position="43"/>
    </location>
    <ligand>
        <name>ATP</name>
        <dbReference type="ChEBI" id="CHEBI:30616"/>
    </ligand>
</feature>
<dbReference type="EC" id="7.-.-.-" evidence="1"/>
<dbReference type="EMBL" id="CP000448">
    <property type="protein sequence ID" value="ABI69593.1"/>
    <property type="molecule type" value="Genomic_DNA"/>
</dbReference>
<dbReference type="RefSeq" id="WP_011641677.1">
    <property type="nucleotide sequence ID" value="NC_008346.1"/>
</dbReference>
<dbReference type="SMR" id="Q0AUL1"/>
<dbReference type="STRING" id="335541.Swol_2302"/>
<dbReference type="KEGG" id="swo:Swol_2302"/>
<dbReference type="eggNOG" id="COG1122">
    <property type="taxonomic scope" value="Bacteria"/>
</dbReference>
<dbReference type="HOGENOM" id="CLU_000604_1_22_9"/>
<dbReference type="OrthoDB" id="9784332at2"/>
<dbReference type="Proteomes" id="UP000001968">
    <property type="component" value="Chromosome"/>
</dbReference>
<dbReference type="GO" id="GO:0043190">
    <property type="term" value="C:ATP-binding cassette (ABC) transporter complex"/>
    <property type="evidence" value="ECO:0007669"/>
    <property type="project" value="TreeGrafter"/>
</dbReference>
<dbReference type="GO" id="GO:0005524">
    <property type="term" value="F:ATP binding"/>
    <property type="evidence" value="ECO:0007669"/>
    <property type="project" value="UniProtKB-KW"/>
</dbReference>
<dbReference type="GO" id="GO:0016887">
    <property type="term" value="F:ATP hydrolysis activity"/>
    <property type="evidence" value="ECO:0007669"/>
    <property type="project" value="InterPro"/>
</dbReference>
<dbReference type="GO" id="GO:0042626">
    <property type="term" value="F:ATPase-coupled transmembrane transporter activity"/>
    <property type="evidence" value="ECO:0007669"/>
    <property type="project" value="TreeGrafter"/>
</dbReference>
<dbReference type="CDD" id="cd03225">
    <property type="entry name" value="ABC_cobalt_CbiO_domain1"/>
    <property type="match status" value="1"/>
</dbReference>
<dbReference type="FunFam" id="3.40.50.300:FF:000224">
    <property type="entry name" value="Energy-coupling factor transporter ATP-binding protein EcfA"/>
    <property type="match status" value="1"/>
</dbReference>
<dbReference type="Gene3D" id="3.40.50.300">
    <property type="entry name" value="P-loop containing nucleotide triphosphate hydrolases"/>
    <property type="match status" value="1"/>
</dbReference>
<dbReference type="InterPro" id="IPR003593">
    <property type="entry name" value="AAA+_ATPase"/>
</dbReference>
<dbReference type="InterPro" id="IPR003439">
    <property type="entry name" value="ABC_transporter-like_ATP-bd"/>
</dbReference>
<dbReference type="InterPro" id="IPR017871">
    <property type="entry name" value="ABC_transporter-like_CS"/>
</dbReference>
<dbReference type="InterPro" id="IPR015856">
    <property type="entry name" value="ABC_transpr_CbiO/EcfA_su"/>
</dbReference>
<dbReference type="InterPro" id="IPR050095">
    <property type="entry name" value="ECF_ABC_transporter_ATP-bd"/>
</dbReference>
<dbReference type="InterPro" id="IPR030947">
    <property type="entry name" value="EcfA_1"/>
</dbReference>
<dbReference type="InterPro" id="IPR027417">
    <property type="entry name" value="P-loop_NTPase"/>
</dbReference>
<dbReference type="NCBIfam" id="TIGR04520">
    <property type="entry name" value="ECF_ATPase_1"/>
    <property type="match status" value="1"/>
</dbReference>
<dbReference type="PANTHER" id="PTHR43553:SF24">
    <property type="entry name" value="ENERGY-COUPLING FACTOR TRANSPORTER ATP-BINDING PROTEIN ECFA1"/>
    <property type="match status" value="1"/>
</dbReference>
<dbReference type="PANTHER" id="PTHR43553">
    <property type="entry name" value="HEAVY METAL TRANSPORTER"/>
    <property type="match status" value="1"/>
</dbReference>
<dbReference type="Pfam" id="PF00005">
    <property type="entry name" value="ABC_tran"/>
    <property type="match status" value="1"/>
</dbReference>
<dbReference type="SMART" id="SM00382">
    <property type="entry name" value="AAA"/>
    <property type="match status" value="1"/>
</dbReference>
<dbReference type="SUPFAM" id="SSF52540">
    <property type="entry name" value="P-loop containing nucleoside triphosphate hydrolases"/>
    <property type="match status" value="1"/>
</dbReference>
<dbReference type="PROSITE" id="PS00211">
    <property type="entry name" value="ABC_TRANSPORTER_1"/>
    <property type="match status" value="1"/>
</dbReference>
<dbReference type="PROSITE" id="PS50893">
    <property type="entry name" value="ABC_TRANSPORTER_2"/>
    <property type="match status" value="1"/>
</dbReference>
<dbReference type="PROSITE" id="PS51246">
    <property type="entry name" value="CBIO"/>
    <property type="match status" value="1"/>
</dbReference>
<protein>
    <recommendedName>
        <fullName evidence="1">Energy-coupling factor transporter ATP-binding protein EcfA</fullName>
        <shortName evidence="1">ECF transporter A component EcfA</shortName>
        <ecNumber evidence="1">7.-.-.-</ecNumber>
    </recommendedName>
</protein>
<sequence>MISIRDLTYFYPEEDLPALKNISLDIRENEFLVILGRNGSGKSTLARLLNGLLLPSQGKVEVDGWNTADANQIQLIRQRVGLLFSNPDNQLISNQVEEDVAFGPENLGLNTAEIRRRVNDSLRLVSMESYKNSAPAFLSGGQKQKIAIAGVMAMKPRYLVLDEALSMIDPRGKREIMESIRSLHKTEGVVVIMITHDLEEAREADRVVVLEEGEVKTISTPEELFPSRASLLALGLAPLEISHIIAEINRQGILLSTDILDIDKLVEEICHFV</sequence>
<accession>Q0AUL1</accession>
<organism>
    <name type="scientific">Syntrophomonas wolfei subsp. wolfei (strain DSM 2245B / Goettingen)</name>
    <dbReference type="NCBI Taxonomy" id="335541"/>
    <lineage>
        <taxon>Bacteria</taxon>
        <taxon>Bacillati</taxon>
        <taxon>Bacillota</taxon>
        <taxon>Clostridia</taxon>
        <taxon>Eubacteriales</taxon>
        <taxon>Syntrophomonadaceae</taxon>
        <taxon>Syntrophomonas</taxon>
    </lineage>
</organism>
<evidence type="ECO:0000255" key="1">
    <source>
        <dbReference type="HAMAP-Rule" id="MF_01710"/>
    </source>
</evidence>
<reference key="1">
    <citation type="journal article" date="2010" name="Environ. Microbiol.">
        <title>The genome of Syntrophomonas wolfei: new insights into syntrophic metabolism and biohydrogen production.</title>
        <authorList>
            <person name="Sieber J.R."/>
            <person name="Sims D.R."/>
            <person name="Han C."/>
            <person name="Kim E."/>
            <person name="Lykidis A."/>
            <person name="Lapidus A.L."/>
            <person name="McDonnald E."/>
            <person name="Rohlin L."/>
            <person name="Culley D.E."/>
            <person name="Gunsalus R."/>
            <person name="McInerney M.J."/>
        </authorList>
    </citation>
    <scope>NUCLEOTIDE SEQUENCE [LARGE SCALE GENOMIC DNA]</scope>
    <source>
        <strain>DSM 2245B / Goettingen</strain>
    </source>
</reference>
<keyword id="KW-0067">ATP-binding</keyword>
<keyword id="KW-1003">Cell membrane</keyword>
<keyword id="KW-0472">Membrane</keyword>
<keyword id="KW-0547">Nucleotide-binding</keyword>
<keyword id="KW-1185">Reference proteome</keyword>
<keyword id="KW-1278">Translocase</keyword>
<keyword id="KW-0813">Transport</keyword>
<comment type="function">
    <text evidence="1">ATP-binding (A) component of a common energy-coupling factor (ECF) ABC-transporter complex. Unlike classic ABC transporters this ECF transporter provides the energy necessary to transport a number of different substrates.</text>
</comment>
<comment type="subunit">
    <text evidence="1">Forms a stable energy-coupling factor (ECF) transporter complex composed of 2 membrane-embedded substrate-binding proteins (S component), 2 ATP-binding proteins (A component) and 2 transmembrane proteins (T component).</text>
</comment>
<comment type="subcellular location">
    <subcellularLocation>
        <location evidence="1">Cell membrane</location>
        <topology evidence="1">Peripheral membrane protein</topology>
    </subcellularLocation>
</comment>
<comment type="similarity">
    <text evidence="1">Belongs to the ABC transporter superfamily. Energy-coupling factor EcfA family.</text>
</comment>
<gene>
    <name evidence="1" type="primary">ecfA</name>
    <name type="synonym">cbiO</name>
    <name type="ordered locus">Swol_2302</name>
</gene>
<name>ECFA_SYNWW</name>
<proteinExistence type="inferred from homology"/>